<dbReference type="EMBL" id="CP001287">
    <property type="protein sequence ID" value="ACK68232.1"/>
    <property type="molecule type" value="Genomic_DNA"/>
</dbReference>
<dbReference type="RefSeq" id="WP_015785286.1">
    <property type="nucleotide sequence ID" value="NC_011726.1"/>
</dbReference>
<dbReference type="SMR" id="B7JV99"/>
<dbReference type="STRING" id="41431.PCC8801_4309"/>
<dbReference type="KEGG" id="cyp:PCC8801_4309"/>
<dbReference type="eggNOG" id="COG2010">
    <property type="taxonomic scope" value="Bacteria"/>
</dbReference>
<dbReference type="HOGENOM" id="CLU_104149_1_0_3"/>
<dbReference type="Proteomes" id="UP000008204">
    <property type="component" value="Chromosome"/>
</dbReference>
<dbReference type="GO" id="GO:0009523">
    <property type="term" value="C:photosystem II"/>
    <property type="evidence" value="ECO:0007669"/>
    <property type="project" value="UniProtKB-KW"/>
</dbReference>
<dbReference type="GO" id="GO:0031676">
    <property type="term" value="C:plasma membrane-derived thylakoid membrane"/>
    <property type="evidence" value="ECO:0007669"/>
    <property type="project" value="UniProtKB-SubCell"/>
</dbReference>
<dbReference type="GO" id="GO:0009055">
    <property type="term" value="F:electron transfer activity"/>
    <property type="evidence" value="ECO:0007669"/>
    <property type="project" value="InterPro"/>
</dbReference>
<dbReference type="GO" id="GO:0020037">
    <property type="term" value="F:heme binding"/>
    <property type="evidence" value="ECO:0007669"/>
    <property type="project" value="InterPro"/>
</dbReference>
<dbReference type="GO" id="GO:0005506">
    <property type="term" value="F:iron ion binding"/>
    <property type="evidence" value="ECO:0007669"/>
    <property type="project" value="InterPro"/>
</dbReference>
<dbReference type="GO" id="GO:0019684">
    <property type="term" value="P:photosynthesis, light reaction"/>
    <property type="evidence" value="ECO:0007669"/>
    <property type="project" value="UniProtKB-UniRule"/>
</dbReference>
<dbReference type="GO" id="GO:0022904">
    <property type="term" value="P:respiratory electron transport chain"/>
    <property type="evidence" value="ECO:0007669"/>
    <property type="project" value="InterPro"/>
</dbReference>
<dbReference type="Gene3D" id="1.10.760.10">
    <property type="entry name" value="Cytochrome c-like domain"/>
    <property type="match status" value="1"/>
</dbReference>
<dbReference type="HAMAP" id="MF_01378">
    <property type="entry name" value="PSII_Cyt550"/>
    <property type="match status" value="1"/>
</dbReference>
<dbReference type="InterPro" id="IPR009056">
    <property type="entry name" value="Cyt_c-like_dom"/>
</dbReference>
<dbReference type="InterPro" id="IPR036909">
    <property type="entry name" value="Cyt_c-like_dom_sf"/>
</dbReference>
<dbReference type="InterPro" id="IPR029490">
    <property type="entry name" value="Cytochrom_C550"/>
</dbReference>
<dbReference type="InterPro" id="IPR017851">
    <property type="entry name" value="PsbV_cyt_c550"/>
</dbReference>
<dbReference type="InterPro" id="IPR016003">
    <property type="entry name" value="PsbV_cyt_c550-like"/>
</dbReference>
<dbReference type="NCBIfam" id="TIGR03045">
    <property type="entry name" value="PS_II_C550"/>
    <property type="match status" value="1"/>
</dbReference>
<dbReference type="Pfam" id="PF14495">
    <property type="entry name" value="Cytochrom_C550"/>
    <property type="match status" value="1"/>
</dbReference>
<dbReference type="PIRSF" id="PIRSF005890">
    <property type="entry name" value="Phot_II_cyt_c550"/>
    <property type="match status" value="1"/>
</dbReference>
<dbReference type="SUPFAM" id="SSF46626">
    <property type="entry name" value="Cytochrome c"/>
    <property type="match status" value="1"/>
</dbReference>
<dbReference type="PROSITE" id="PS51007">
    <property type="entry name" value="CYTC"/>
    <property type="match status" value="1"/>
</dbReference>
<reference key="1">
    <citation type="journal article" date="2011" name="MBio">
        <title>Novel metabolic attributes of the genus Cyanothece, comprising a group of unicellular nitrogen-fixing Cyanobacteria.</title>
        <authorList>
            <person name="Bandyopadhyay A."/>
            <person name="Elvitigala T."/>
            <person name="Welsh E."/>
            <person name="Stockel J."/>
            <person name="Liberton M."/>
            <person name="Min H."/>
            <person name="Sherman L.A."/>
            <person name="Pakrasi H.B."/>
        </authorList>
    </citation>
    <scope>NUCLEOTIDE SEQUENCE [LARGE SCALE GENOMIC DNA]</scope>
    <source>
        <strain>PCC 8801 / RF-1</strain>
    </source>
</reference>
<organism>
    <name type="scientific">Rippkaea orientalis (strain PCC 8801 / RF-1)</name>
    <name type="common">Cyanothece sp. (strain PCC 8801)</name>
    <dbReference type="NCBI Taxonomy" id="41431"/>
    <lineage>
        <taxon>Bacteria</taxon>
        <taxon>Bacillati</taxon>
        <taxon>Cyanobacteriota</taxon>
        <taxon>Cyanophyceae</taxon>
        <taxon>Oscillatoriophycideae</taxon>
        <taxon>Chroococcales</taxon>
        <taxon>Aphanothecaceae</taxon>
        <taxon>Rippkaea</taxon>
        <taxon>Rippkaea orientalis</taxon>
    </lineage>
</organism>
<name>CY550_RIPO1</name>
<feature type="signal peptide" evidence="1">
    <location>
        <begin position="1"/>
        <end position="25"/>
    </location>
</feature>
<feature type="chain" id="PRO_5000417522" description="Photosystem II extrinsic protein V">
    <location>
        <begin position="26"/>
        <end position="160"/>
    </location>
</feature>
<feature type="binding site" description="covalent" evidence="1">
    <location>
        <position position="62"/>
    </location>
    <ligand>
        <name>heme c</name>
        <dbReference type="ChEBI" id="CHEBI:61717"/>
    </ligand>
</feature>
<feature type="binding site" description="covalent" evidence="1">
    <location>
        <position position="65"/>
    </location>
    <ligand>
        <name>heme c</name>
        <dbReference type="ChEBI" id="CHEBI:61717"/>
    </ligand>
</feature>
<feature type="binding site" description="axial binding residue" evidence="1">
    <location>
        <position position="66"/>
    </location>
    <ligand>
        <name>heme c</name>
        <dbReference type="ChEBI" id="CHEBI:61717"/>
    </ligand>
    <ligandPart>
        <name>Fe</name>
        <dbReference type="ChEBI" id="CHEBI:18248"/>
    </ligandPart>
</feature>
<feature type="binding site" description="axial binding residue" evidence="1">
    <location>
        <position position="117"/>
    </location>
    <ligand>
        <name>heme c</name>
        <dbReference type="ChEBI" id="CHEBI:61717"/>
    </ligand>
    <ligandPart>
        <name>Fe</name>
        <dbReference type="ChEBI" id="CHEBI:18248"/>
    </ligandPart>
</feature>
<proteinExistence type="inferred from homology"/>
<evidence type="ECO:0000255" key="1">
    <source>
        <dbReference type="HAMAP-Rule" id="MF_01378"/>
    </source>
</evidence>
<protein>
    <recommendedName>
        <fullName evidence="1">Photosystem II extrinsic protein V</fullName>
        <shortName evidence="1">PsbV</shortName>
    </recommendedName>
    <alternativeName>
        <fullName evidence="1">Cytochrome c-550</fullName>
    </alternativeName>
    <alternativeName>
        <fullName evidence="1">Cytochrome c550</fullName>
    </alternativeName>
    <alternativeName>
        <fullName evidence="1">Low-potential cytochrome c</fullName>
    </alternativeName>
</protein>
<gene>
    <name evidence="1" type="primary">psbV</name>
    <name type="ordered locus">PCC8801_4309</name>
</gene>
<keyword id="KW-0249">Electron transport</keyword>
<keyword id="KW-0349">Heme</keyword>
<keyword id="KW-0408">Iron</keyword>
<keyword id="KW-0472">Membrane</keyword>
<keyword id="KW-0479">Metal-binding</keyword>
<keyword id="KW-0602">Photosynthesis</keyword>
<keyword id="KW-0604">Photosystem II</keyword>
<keyword id="KW-1185">Reference proteome</keyword>
<keyword id="KW-0732">Signal</keyword>
<keyword id="KW-0793">Thylakoid</keyword>
<keyword id="KW-0813">Transport</keyword>
<sequence length="160" mass="18026">MKRFILLAIATVFFFCQFQTNPVNALELDEATRTVALDETGKTTIVTSKQITNGQRLFVQECTQCHLQGKTKTNNNVSLGLDDLAGAEPPRNNVLALVDYLKHPTSYDGEDNYEELHVNVTRPDLFPELRNFTEDDLYDVAGYVLVAPKLDAYWGGSIYF</sequence>
<comment type="function">
    <text evidence="1">One of the extrinsic, lumenal subunits of photosystem II (PSII). PSII is a light-driven water plastoquinone oxidoreductase, using light energy to abstract electrons from H(2)O, generating a proton gradient subsequently used for ATP formation. The extrinsic proteins stabilize the structure of photosystem II oxygen-evolving complex (OEC), the ion environment of oxygen evolution and protect the OEC against heat-induced inactivation. Low-potential cytochrome c that plays a role in the OEC of PSII.</text>
</comment>
<comment type="cofactor">
    <cofactor evidence="1">
        <name>heme c</name>
        <dbReference type="ChEBI" id="CHEBI:61717"/>
    </cofactor>
    <text evidence="1">Binds 1 heme c group covalently per subunit.</text>
</comment>
<comment type="subunit">
    <text evidence="1">PSII is composed of 1 copy each of membrane proteins PsbA, PsbB, PsbC, PsbD, PsbE, PsbF, PsbH, PsbI, PsbJ, PsbK, PsbL, PsbM, PsbT, PsbX, PsbY, PsbZ, Psb30/Ycf12, peripheral proteins PsbO, CyanoQ (PsbQ), PsbU, PsbV and a large number of cofactors. It forms dimeric complexes.</text>
</comment>
<comment type="subcellular location">
    <subcellularLocation>
        <location evidence="1">Cellular thylakoid membrane</location>
        <topology evidence="1">Peripheral membrane protein</topology>
        <orientation evidence="1">Lumenal side</orientation>
    </subcellularLocation>
    <text evidence="1">Associated with photosystem II at the lumenal side of the thylakoid membrane.</text>
</comment>
<comment type="similarity">
    <text evidence="1">Belongs to the cytochrome c family. PsbV subfamily.</text>
</comment>
<accession>B7JV99</accession>